<gene>
    <name type="primary">APOC1</name>
</gene>
<comment type="function">
    <text evidence="1 2">Inhibitor of lipoprotein binding to the low density lipoprotein (LDL) receptor, LDL receptor-related protein, and very low density lipoprotein (VLDL) receptor. Associates with high density lipoproteins (HDL) and the triacylglycerol-rich lipoproteins in the plasma and makes up about 10% of the protein of the VLDL and 2% of that of HDL. Appears to interfere directly with fatty acid uptake and is also the major plasma inhibitor of cholesteryl ester transfer protein (CETP). Binds free fatty acids and reduces their intracellular esterification. Modulates the interaction of APOE with beta-migrating VLDL and inhibits binding of beta-VLDL to the LDL receptor-related protein.</text>
</comment>
<comment type="subcellular location">
    <subcellularLocation>
        <location evidence="1">Secreted</location>
    </subcellularLocation>
</comment>
<comment type="similarity">
    <text evidence="5">Belongs to the apolipoprotein C1 family.</text>
</comment>
<proteinExistence type="inferred from homology"/>
<reference key="1">
    <citation type="journal article" date="2020" name="DNA Res.">
        <title>Comparative genomic analyses illuminate the distinct evolution of megabats within Chiroptera.</title>
        <authorList>
            <person name="Nikaido M."/>
            <person name="Kondo S."/>
            <person name="Zhang Z."/>
            <person name="Wu J."/>
            <person name="Nishihara H."/>
            <person name="Niimura Y."/>
            <person name="Suzuki S."/>
            <person name="Touhara K."/>
            <person name="Suzuki Y."/>
            <person name="Noguchi H."/>
            <person name="Minakuchi Y."/>
            <person name="Toyoda A."/>
            <person name="Fujiyama A."/>
            <person name="Sugano S."/>
            <person name="Yoneda M."/>
            <person name="Kai C."/>
        </authorList>
    </citation>
    <scope>NUCLEOTIDE SEQUENCE [LARGE SCALE GENOMIC DNA]</scope>
</reference>
<reference key="2">
    <citation type="unpublished observations" date="2021-01">
        <authorList>
            <person name="Puppione D.L."/>
        </authorList>
    </citation>
    <scope>IDENTIFICATION</scope>
</reference>
<feature type="signal peptide" evidence="4">
    <location>
        <begin position="1"/>
        <end position="26"/>
    </location>
</feature>
<feature type="chain" id="PRO_0000452415" description="Apolipoprotein C-I">
    <location>
        <begin position="27"/>
        <end position="83"/>
    </location>
</feature>
<feature type="chain" id="PRO_0000452416" description="Truncated apolipoprotein C-I" evidence="3">
    <location>
        <begin position="29"/>
        <end position="83"/>
    </location>
</feature>
<sequence>MRLILSLPVLAVVLAMVLEGPAPAQAAPDVSSTLESISEKLTEFGRTVADKFRTAVDQIKKSDFPEKTRNWFSEMFNKLKEKF</sequence>
<name>APOC1_ROULE</name>
<organism>
    <name type="scientific">Rousettus leschenaultii</name>
    <name type="common">Leschenault's rousette</name>
    <name type="synonym">Pteropus leschenaultii</name>
    <dbReference type="NCBI Taxonomy" id="9408"/>
    <lineage>
        <taxon>Eukaryota</taxon>
        <taxon>Metazoa</taxon>
        <taxon>Chordata</taxon>
        <taxon>Craniata</taxon>
        <taxon>Vertebrata</taxon>
        <taxon>Euteleostomi</taxon>
        <taxon>Mammalia</taxon>
        <taxon>Eutheria</taxon>
        <taxon>Laurasiatheria</taxon>
        <taxon>Chiroptera</taxon>
        <taxon>Yinpterochiroptera</taxon>
        <taxon>Pteropodoidea</taxon>
        <taxon>Pteropodidae</taxon>
        <taxon>Rousettinae</taxon>
        <taxon>Rousettus</taxon>
    </lineage>
</organism>
<keyword id="KW-0445">Lipid transport</keyword>
<keyword id="KW-0964">Secreted</keyword>
<keyword id="KW-0732">Signal</keyword>
<keyword id="KW-0813">Transport</keyword>
<keyword id="KW-0850">VLDL</keyword>
<protein>
    <recommendedName>
        <fullName>Apolipoprotein C-I</fullName>
        <shortName>Apo-CI</shortName>
        <shortName>ApoC-I</shortName>
    </recommendedName>
    <alternativeName>
        <fullName>Apolipoprotein C1</fullName>
    </alternativeName>
    <component>
        <recommendedName>
            <fullName>Truncated apolipoprotein C-I</fullName>
        </recommendedName>
    </component>
</protein>
<accession>P0DTG5</accession>
<evidence type="ECO:0000250" key="1">
    <source>
        <dbReference type="UniProtKB" id="P02654"/>
    </source>
</evidence>
<evidence type="ECO:0000250" key="2">
    <source>
        <dbReference type="UniProtKB" id="P33047"/>
    </source>
</evidence>
<evidence type="ECO:0000250" key="3">
    <source>
        <dbReference type="UniProtKB" id="P86336"/>
    </source>
</evidence>
<evidence type="ECO:0000255" key="4"/>
<evidence type="ECO:0000305" key="5"/>
<dbReference type="EMBL" id="BNJM01000029">
    <property type="status" value="NOT_ANNOTATED_CDS"/>
    <property type="molecule type" value="Genomic_DNA"/>
</dbReference>
<dbReference type="SMR" id="P0DTG5"/>
<dbReference type="GO" id="GO:0034364">
    <property type="term" value="C:high-density lipoprotein particle"/>
    <property type="evidence" value="ECO:0007669"/>
    <property type="project" value="TreeGrafter"/>
</dbReference>
<dbReference type="GO" id="GO:0034361">
    <property type="term" value="C:very-low-density lipoprotein particle"/>
    <property type="evidence" value="ECO:0007669"/>
    <property type="project" value="UniProtKB-KW"/>
</dbReference>
<dbReference type="GO" id="GO:0005504">
    <property type="term" value="F:fatty acid binding"/>
    <property type="evidence" value="ECO:0007669"/>
    <property type="project" value="TreeGrafter"/>
</dbReference>
<dbReference type="GO" id="GO:0004859">
    <property type="term" value="F:phospholipase inhibitor activity"/>
    <property type="evidence" value="ECO:0007669"/>
    <property type="project" value="TreeGrafter"/>
</dbReference>
<dbReference type="GO" id="GO:0006869">
    <property type="term" value="P:lipid transport"/>
    <property type="evidence" value="ECO:0007669"/>
    <property type="project" value="UniProtKB-KW"/>
</dbReference>
<dbReference type="GO" id="GO:0042157">
    <property type="term" value="P:lipoprotein metabolic process"/>
    <property type="evidence" value="ECO:0007669"/>
    <property type="project" value="InterPro"/>
</dbReference>
<dbReference type="GO" id="GO:0032375">
    <property type="term" value="P:negative regulation of cholesterol transport"/>
    <property type="evidence" value="ECO:0007669"/>
    <property type="project" value="TreeGrafter"/>
</dbReference>
<dbReference type="GO" id="GO:0050995">
    <property type="term" value="P:negative regulation of lipid catabolic process"/>
    <property type="evidence" value="ECO:0007669"/>
    <property type="project" value="TreeGrafter"/>
</dbReference>
<dbReference type="GO" id="GO:0010916">
    <property type="term" value="P:negative regulation of very-low-density lipoprotein particle clearance"/>
    <property type="evidence" value="ECO:0007669"/>
    <property type="project" value="TreeGrafter"/>
</dbReference>
<dbReference type="GO" id="GO:0006641">
    <property type="term" value="P:triglyceride metabolic process"/>
    <property type="evidence" value="ECO:0007669"/>
    <property type="project" value="TreeGrafter"/>
</dbReference>
<dbReference type="GO" id="GO:0034447">
    <property type="term" value="P:very-low-density lipoprotein particle clearance"/>
    <property type="evidence" value="ECO:0007669"/>
    <property type="project" value="TreeGrafter"/>
</dbReference>
<dbReference type="Gene3D" id="4.10.260.30">
    <property type="entry name" value="Apolipoprotein C-I"/>
    <property type="match status" value="1"/>
</dbReference>
<dbReference type="InterPro" id="IPR043081">
    <property type="entry name" value="ApoC-1_sf"/>
</dbReference>
<dbReference type="InterPro" id="IPR006781">
    <property type="entry name" value="ApoC-I"/>
</dbReference>
<dbReference type="PANTHER" id="PTHR16565">
    <property type="entry name" value="APOLIPOPROTEIN C-I"/>
    <property type="match status" value="1"/>
</dbReference>
<dbReference type="PANTHER" id="PTHR16565:SF2">
    <property type="entry name" value="APOLIPOPROTEIN C-I"/>
    <property type="match status" value="1"/>
</dbReference>
<dbReference type="Pfam" id="PF04691">
    <property type="entry name" value="ApoC-I"/>
    <property type="match status" value="1"/>
</dbReference>